<sequence length="398" mass="42318">MNIHEYQAKAVLREFGVPVGHGFPIFKASEAEAAAKQLGGPVWVVKSQIHAGGRGKGKFKEASAGDKGGVRLAKSIDEVKEFAKQMLGATLVTVQTGADGKQVNRLYIEEGSDIDKEFYLSLLVDRATSRISFVVSTEGGMSIEDVAHETPEKIVSFTVDPATGIMGHHGRTVAKALNLKGEQAKQAEAMVAKLYTAFVAKDMDMLEINPLVLTKQGDLKCLDAKISFDGNALYRHTDIQALRDETEEDAKEIEASKYDLNYVTLDGTIGCMVNGAGLAMATMDIIKLYGMSPANFLDVGGGASKEKVTAAFKIITADPNVKGILINIFGGIMKCDVIAEGVVAAVKEVGLDVPLVVRLEGTNVEAGKKIIKHSGLNVLPADNLDDAAQKIVAAVKGA</sequence>
<organism>
    <name type="scientific">Rhodopseudomonas palustris (strain ATCC BAA-98 / CGA009)</name>
    <dbReference type="NCBI Taxonomy" id="258594"/>
    <lineage>
        <taxon>Bacteria</taxon>
        <taxon>Pseudomonadati</taxon>
        <taxon>Pseudomonadota</taxon>
        <taxon>Alphaproteobacteria</taxon>
        <taxon>Hyphomicrobiales</taxon>
        <taxon>Nitrobacteraceae</taxon>
        <taxon>Rhodopseudomonas</taxon>
    </lineage>
</organism>
<gene>
    <name evidence="1" type="primary">sucC</name>
    <name type="ordered locus">RPA0191</name>
</gene>
<reference key="1">
    <citation type="journal article" date="2004" name="Nat. Biotechnol.">
        <title>Complete genome sequence of the metabolically versatile photosynthetic bacterium Rhodopseudomonas palustris.</title>
        <authorList>
            <person name="Larimer F.W."/>
            <person name="Chain P."/>
            <person name="Hauser L."/>
            <person name="Lamerdin J.E."/>
            <person name="Malfatti S."/>
            <person name="Do L."/>
            <person name="Land M.L."/>
            <person name="Pelletier D.A."/>
            <person name="Beatty J.T."/>
            <person name="Lang A.S."/>
            <person name="Tabita F.R."/>
            <person name="Gibson J.L."/>
            <person name="Hanson T.E."/>
            <person name="Bobst C."/>
            <person name="Torres y Torres J.L."/>
            <person name="Peres C."/>
            <person name="Harrison F.H."/>
            <person name="Gibson J."/>
            <person name="Harwood C.S."/>
        </authorList>
    </citation>
    <scope>NUCLEOTIDE SEQUENCE [LARGE SCALE GENOMIC DNA]</scope>
    <source>
        <strain>ATCC BAA-98 / CGA009</strain>
    </source>
</reference>
<feature type="chain" id="PRO_1000082191" description="Succinate--CoA ligase [ADP-forming] subunit beta">
    <location>
        <begin position="1"/>
        <end position="398"/>
    </location>
</feature>
<feature type="domain" description="ATP-grasp" evidence="1">
    <location>
        <begin position="9"/>
        <end position="254"/>
    </location>
</feature>
<feature type="binding site" evidence="1">
    <location>
        <position position="46"/>
    </location>
    <ligand>
        <name>ATP</name>
        <dbReference type="ChEBI" id="CHEBI:30616"/>
    </ligand>
</feature>
<feature type="binding site" evidence="1">
    <location>
        <begin position="53"/>
        <end position="55"/>
    </location>
    <ligand>
        <name>ATP</name>
        <dbReference type="ChEBI" id="CHEBI:30616"/>
    </ligand>
</feature>
<feature type="binding site" evidence="1">
    <location>
        <position position="109"/>
    </location>
    <ligand>
        <name>ATP</name>
        <dbReference type="ChEBI" id="CHEBI:30616"/>
    </ligand>
</feature>
<feature type="binding site" evidence="1">
    <location>
        <position position="112"/>
    </location>
    <ligand>
        <name>ATP</name>
        <dbReference type="ChEBI" id="CHEBI:30616"/>
    </ligand>
</feature>
<feature type="binding site" evidence="1">
    <location>
        <position position="117"/>
    </location>
    <ligand>
        <name>ATP</name>
        <dbReference type="ChEBI" id="CHEBI:30616"/>
    </ligand>
</feature>
<feature type="binding site" evidence="1">
    <location>
        <position position="209"/>
    </location>
    <ligand>
        <name>Mg(2+)</name>
        <dbReference type="ChEBI" id="CHEBI:18420"/>
    </ligand>
</feature>
<feature type="binding site" evidence="1">
    <location>
        <position position="223"/>
    </location>
    <ligand>
        <name>Mg(2+)</name>
        <dbReference type="ChEBI" id="CHEBI:18420"/>
    </ligand>
</feature>
<feature type="binding site" evidence="1">
    <location>
        <position position="274"/>
    </location>
    <ligand>
        <name>substrate</name>
        <note>ligand shared with subunit alpha</note>
    </ligand>
</feature>
<feature type="binding site" evidence="1">
    <location>
        <begin position="331"/>
        <end position="333"/>
    </location>
    <ligand>
        <name>substrate</name>
        <note>ligand shared with subunit alpha</note>
    </ligand>
</feature>
<evidence type="ECO:0000255" key="1">
    <source>
        <dbReference type="HAMAP-Rule" id="MF_00558"/>
    </source>
</evidence>
<protein>
    <recommendedName>
        <fullName evidence="1">Succinate--CoA ligase [ADP-forming] subunit beta</fullName>
        <ecNumber evidence="1">6.2.1.5</ecNumber>
    </recommendedName>
    <alternativeName>
        <fullName evidence="1">Succinyl-CoA synthetase subunit beta</fullName>
        <shortName evidence="1">SCS-beta</shortName>
    </alternativeName>
</protein>
<keyword id="KW-0067">ATP-binding</keyword>
<keyword id="KW-0436">Ligase</keyword>
<keyword id="KW-0460">Magnesium</keyword>
<keyword id="KW-0479">Metal-binding</keyword>
<keyword id="KW-0547">Nucleotide-binding</keyword>
<keyword id="KW-0816">Tricarboxylic acid cycle</keyword>
<dbReference type="EC" id="6.2.1.5" evidence="1"/>
<dbReference type="EMBL" id="BX572593">
    <property type="protein sequence ID" value="CAE25635.1"/>
    <property type="molecule type" value="Genomic_DNA"/>
</dbReference>
<dbReference type="RefSeq" id="WP_011155759.1">
    <property type="nucleotide sequence ID" value="NZ_CP116810.1"/>
</dbReference>
<dbReference type="SMR" id="Q6NDB7"/>
<dbReference type="STRING" id="258594.RPA0191"/>
<dbReference type="GeneID" id="66891196"/>
<dbReference type="eggNOG" id="COG0045">
    <property type="taxonomic scope" value="Bacteria"/>
</dbReference>
<dbReference type="HOGENOM" id="CLU_037430_0_2_5"/>
<dbReference type="PhylomeDB" id="Q6NDB7"/>
<dbReference type="UniPathway" id="UPA00223">
    <property type="reaction ID" value="UER00999"/>
</dbReference>
<dbReference type="GO" id="GO:0005829">
    <property type="term" value="C:cytosol"/>
    <property type="evidence" value="ECO:0007669"/>
    <property type="project" value="TreeGrafter"/>
</dbReference>
<dbReference type="GO" id="GO:0042709">
    <property type="term" value="C:succinate-CoA ligase complex"/>
    <property type="evidence" value="ECO:0007669"/>
    <property type="project" value="TreeGrafter"/>
</dbReference>
<dbReference type="GO" id="GO:0005524">
    <property type="term" value="F:ATP binding"/>
    <property type="evidence" value="ECO:0007669"/>
    <property type="project" value="UniProtKB-UniRule"/>
</dbReference>
<dbReference type="GO" id="GO:0000287">
    <property type="term" value="F:magnesium ion binding"/>
    <property type="evidence" value="ECO:0007669"/>
    <property type="project" value="UniProtKB-UniRule"/>
</dbReference>
<dbReference type="GO" id="GO:0004775">
    <property type="term" value="F:succinate-CoA ligase (ADP-forming) activity"/>
    <property type="evidence" value="ECO:0007669"/>
    <property type="project" value="UniProtKB-UniRule"/>
</dbReference>
<dbReference type="GO" id="GO:0004776">
    <property type="term" value="F:succinate-CoA ligase (GDP-forming) activity"/>
    <property type="evidence" value="ECO:0007669"/>
    <property type="project" value="RHEA"/>
</dbReference>
<dbReference type="GO" id="GO:0006104">
    <property type="term" value="P:succinyl-CoA metabolic process"/>
    <property type="evidence" value="ECO:0007669"/>
    <property type="project" value="TreeGrafter"/>
</dbReference>
<dbReference type="GO" id="GO:0006099">
    <property type="term" value="P:tricarboxylic acid cycle"/>
    <property type="evidence" value="ECO:0007669"/>
    <property type="project" value="UniProtKB-UniRule"/>
</dbReference>
<dbReference type="FunFam" id="3.30.1490.20:FF:000002">
    <property type="entry name" value="Succinate--CoA ligase [ADP-forming] subunit beta"/>
    <property type="match status" value="1"/>
</dbReference>
<dbReference type="FunFam" id="3.30.470.20:FF:000002">
    <property type="entry name" value="Succinate--CoA ligase [ADP-forming] subunit beta"/>
    <property type="match status" value="1"/>
</dbReference>
<dbReference type="FunFam" id="3.40.50.261:FF:000001">
    <property type="entry name" value="Succinate--CoA ligase [ADP-forming] subunit beta"/>
    <property type="match status" value="1"/>
</dbReference>
<dbReference type="Gene3D" id="3.30.1490.20">
    <property type="entry name" value="ATP-grasp fold, A domain"/>
    <property type="match status" value="1"/>
</dbReference>
<dbReference type="Gene3D" id="3.30.470.20">
    <property type="entry name" value="ATP-grasp fold, B domain"/>
    <property type="match status" value="1"/>
</dbReference>
<dbReference type="Gene3D" id="3.40.50.261">
    <property type="entry name" value="Succinyl-CoA synthetase domains"/>
    <property type="match status" value="1"/>
</dbReference>
<dbReference type="HAMAP" id="MF_00558">
    <property type="entry name" value="Succ_CoA_beta"/>
    <property type="match status" value="1"/>
</dbReference>
<dbReference type="InterPro" id="IPR011761">
    <property type="entry name" value="ATP-grasp"/>
</dbReference>
<dbReference type="InterPro" id="IPR013650">
    <property type="entry name" value="ATP-grasp_succ-CoA_synth-type"/>
</dbReference>
<dbReference type="InterPro" id="IPR013815">
    <property type="entry name" value="ATP_grasp_subdomain_1"/>
</dbReference>
<dbReference type="InterPro" id="IPR005811">
    <property type="entry name" value="SUCC_ACL_C"/>
</dbReference>
<dbReference type="InterPro" id="IPR005809">
    <property type="entry name" value="Succ_CoA_ligase-like_bsu"/>
</dbReference>
<dbReference type="InterPro" id="IPR016102">
    <property type="entry name" value="Succinyl-CoA_synth-like"/>
</dbReference>
<dbReference type="NCBIfam" id="NF001913">
    <property type="entry name" value="PRK00696.1"/>
    <property type="match status" value="1"/>
</dbReference>
<dbReference type="NCBIfam" id="TIGR01016">
    <property type="entry name" value="sucCoAbeta"/>
    <property type="match status" value="1"/>
</dbReference>
<dbReference type="PANTHER" id="PTHR11815:SF10">
    <property type="entry name" value="SUCCINATE--COA LIGASE [GDP-FORMING] SUBUNIT BETA, MITOCHONDRIAL"/>
    <property type="match status" value="1"/>
</dbReference>
<dbReference type="PANTHER" id="PTHR11815">
    <property type="entry name" value="SUCCINYL-COA SYNTHETASE BETA CHAIN"/>
    <property type="match status" value="1"/>
</dbReference>
<dbReference type="Pfam" id="PF08442">
    <property type="entry name" value="ATP-grasp_2"/>
    <property type="match status" value="1"/>
</dbReference>
<dbReference type="Pfam" id="PF00549">
    <property type="entry name" value="Ligase_CoA"/>
    <property type="match status" value="1"/>
</dbReference>
<dbReference type="PIRSF" id="PIRSF001554">
    <property type="entry name" value="SucCS_beta"/>
    <property type="match status" value="1"/>
</dbReference>
<dbReference type="SUPFAM" id="SSF56059">
    <property type="entry name" value="Glutathione synthetase ATP-binding domain-like"/>
    <property type="match status" value="1"/>
</dbReference>
<dbReference type="SUPFAM" id="SSF52210">
    <property type="entry name" value="Succinyl-CoA synthetase domains"/>
    <property type="match status" value="1"/>
</dbReference>
<dbReference type="PROSITE" id="PS50975">
    <property type="entry name" value="ATP_GRASP"/>
    <property type="match status" value="1"/>
</dbReference>
<name>SUCC_RHOPA</name>
<accession>Q6NDB7</accession>
<comment type="function">
    <text evidence="1">Succinyl-CoA synthetase functions in the citric acid cycle (TCA), coupling the hydrolysis of succinyl-CoA to the synthesis of either ATP or GTP and thus represents the only step of substrate-level phosphorylation in the TCA. The beta subunit provides nucleotide specificity of the enzyme and binds the substrate succinate, while the binding sites for coenzyme A and phosphate are found in the alpha subunit.</text>
</comment>
<comment type="catalytic activity">
    <reaction evidence="1">
        <text>succinate + ATP + CoA = succinyl-CoA + ADP + phosphate</text>
        <dbReference type="Rhea" id="RHEA:17661"/>
        <dbReference type="ChEBI" id="CHEBI:30031"/>
        <dbReference type="ChEBI" id="CHEBI:30616"/>
        <dbReference type="ChEBI" id="CHEBI:43474"/>
        <dbReference type="ChEBI" id="CHEBI:57287"/>
        <dbReference type="ChEBI" id="CHEBI:57292"/>
        <dbReference type="ChEBI" id="CHEBI:456216"/>
        <dbReference type="EC" id="6.2.1.5"/>
    </reaction>
    <physiologicalReaction direction="right-to-left" evidence="1">
        <dbReference type="Rhea" id="RHEA:17663"/>
    </physiologicalReaction>
</comment>
<comment type="catalytic activity">
    <reaction evidence="1">
        <text>GTP + succinate + CoA = succinyl-CoA + GDP + phosphate</text>
        <dbReference type="Rhea" id="RHEA:22120"/>
        <dbReference type="ChEBI" id="CHEBI:30031"/>
        <dbReference type="ChEBI" id="CHEBI:37565"/>
        <dbReference type="ChEBI" id="CHEBI:43474"/>
        <dbReference type="ChEBI" id="CHEBI:57287"/>
        <dbReference type="ChEBI" id="CHEBI:57292"/>
        <dbReference type="ChEBI" id="CHEBI:58189"/>
    </reaction>
    <physiologicalReaction direction="right-to-left" evidence="1">
        <dbReference type="Rhea" id="RHEA:22122"/>
    </physiologicalReaction>
</comment>
<comment type="cofactor">
    <cofactor evidence="1">
        <name>Mg(2+)</name>
        <dbReference type="ChEBI" id="CHEBI:18420"/>
    </cofactor>
    <text evidence="1">Binds 1 Mg(2+) ion per subunit.</text>
</comment>
<comment type="pathway">
    <text evidence="1">Carbohydrate metabolism; tricarboxylic acid cycle; succinate from succinyl-CoA (ligase route): step 1/1.</text>
</comment>
<comment type="subunit">
    <text evidence="1">Heterotetramer of two alpha and two beta subunits.</text>
</comment>
<comment type="similarity">
    <text evidence="1">Belongs to the succinate/malate CoA ligase beta subunit family.</text>
</comment>
<proteinExistence type="inferred from homology"/>